<accession>B4GCP2</accession>
<gene>
    <name evidence="1" type="primary">Eaf</name>
    <name type="ORF">GL10937</name>
</gene>
<comment type="function">
    <text evidence="1">Promotes transcriptional elongation by Su(Tpl)/ELL. Essential for development (By similarity).</text>
</comment>
<comment type="subcellular location">
    <subcellularLocation>
        <location evidence="2">Nucleus</location>
    </subcellularLocation>
</comment>
<comment type="similarity">
    <text evidence="3">Belongs to the EAF family.</text>
</comment>
<feature type="chain" id="PRO_0000386602" description="Ell-associated factor Eaf">
    <location>
        <begin position="1"/>
        <end position="544"/>
    </location>
</feature>
<feature type="region of interest" description="Disordered" evidence="4">
    <location>
        <begin position="147"/>
        <end position="544"/>
    </location>
</feature>
<feature type="compositionally biased region" description="Basic and acidic residues" evidence="4">
    <location>
        <begin position="193"/>
        <end position="202"/>
    </location>
</feature>
<feature type="compositionally biased region" description="Low complexity" evidence="4">
    <location>
        <begin position="264"/>
        <end position="273"/>
    </location>
</feature>
<feature type="compositionally biased region" description="Basic residues" evidence="4">
    <location>
        <begin position="287"/>
        <end position="299"/>
    </location>
</feature>
<feature type="compositionally biased region" description="Low complexity" evidence="4">
    <location>
        <begin position="305"/>
        <end position="319"/>
    </location>
</feature>
<feature type="compositionally biased region" description="Low complexity" evidence="4">
    <location>
        <begin position="333"/>
        <end position="374"/>
    </location>
</feature>
<feature type="compositionally biased region" description="Low complexity" evidence="4">
    <location>
        <begin position="396"/>
        <end position="407"/>
    </location>
</feature>
<feature type="compositionally biased region" description="Acidic residues" evidence="4">
    <location>
        <begin position="425"/>
        <end position="440"/>
    </location>
</feature>
<feature type="compositionally biased region" description="Low complexity" evidence="4">
    <location>
        <begin position="450"/>
        <end position="483"/>
    </location>
</feature>
<feature type="compositionally biased region" description="Low complexity" evidence="4">
    <location>
        <begin position="503"/>
        <end position="513"/>
    </location>
</feature>
<feature type="compositionally biased region" description="Low complexity" evidence="4">
    <location>
        <begin position="526"/>
        <end position="544"/>
    </location>
</feature>
<feature type="modified residue" description="Phosphoserine" evidence="1">
    <location>
        <position position="205"/>
    </location>
</feature>
<dbReference type="EMBL" id="CH479181">
    <property type="protein sequence ID" value="EDW31490.1"/>
    <property type="molecule type" value="Genomic_DNA"/>
</dbReference>
<dbReference type="RefSeq" id="XP_002015600.1">
    <property type="nucleotide sequence ID" value="XM_002015564.1"/>
</dbReference>
<dbReference type="SMR" id="B4GCP2"/>
<dbReference type="STRING" id="7234.B4GCP2"/>
<dbReference type="EnsemblMetazoa" id="FBtr0176552">
    <property type="protein sequence ID" value="FBpp0175044"/>
    <property type="gene ID" value="FBgn0148547"/>
</dbReference>
<dbReference type="eggNOG" id="KOG4795">
    <property type="taxonomic scope" value="Eukaryota"/>
</dbReference>
<dbReference type="HOGENOM" id="CLU_025755_2_1_1"/>
<dbReference type="OMA" id="SSHMGKQ"/>
<dbReference type="OrthoDB" id="125903at2759"/>
<dbReference type="PhylomeDB" id="B4GCP2"/>
<dbReference type="Proteomes" id="UP000008744">
    <property type="component" value="Unassembled WGS sequence"/>
</dbReference>
<dbReference type="GO" id="GO:0005654">
    <property type="term" value="C:nucleoplasm"/>
    <property type="evidence" value="ECO:0000250"/>
    <property type="project" value="UniProtKB"/>
</dbReference>
<dbReference type="GO" id="GO:0032783">
    <property type="term" value="C:super elongation complex"/>
    <property type="evidence" value="ECO:0007669"/>
    <property type="project" value="EnsemblMetazoa"/>
</dbReference>
<dbReference type="GO" id="GO:0003711">
    <property type="term" value="F:transcription elongation factor activity"/>
    <property type="evidence" value="ECO:0007669"/>
    <property type="project" value="TreeGrafter"/>
</dbReference>
<dbReference type="GO" id="GO:0034605">
    <property type="term" value="P:cellular response to heat"/>
    <property type="evidence" value="ECO:0007669"/>
    <property type="project" value="EnsemblMetazoa"/>
</dbReference>
<dbReference type="GO" id="GO:0045893">
    <property type="term" value="P:positive regulation of DNA-templated transcription"/>
    <property type="evidence" value="ECO:0000250"/>
    <property type="project" value="UniProtKB"/>
</dbReference>
<dbReference type="GO" id="GO:0006368">
    <property type="term" value="P:transcription elongation by RNA polymerase II"/>
    <property type="evidence" value="ECO:0007669"/>
    <property type="project" value="InterPro"/>
</dbReference>
<dbReference type="InterPro" id="IPR027093">
    <property type="entry name" value="EAF_fam"/>
</dbReference>
<dbReference type="InterPro" id="IPR019194">
    <property type="entry name" value="Tscrpt_elong_fac_Eaf_N"/>
</dbReference>
<dbReference type="PANTHER" id="PTHR15970">
    <property type="entry name" value="ELL-ASSOCIATED FACTOR EAF"/>
    <property type="match status" value="1"/>
</dbReference>
<dbReference type="PANTHER" id="PTHR15970:SF2">
    <property type="entry name" value="ELL-ASSOCIATED FACTOR EAF"/>
    <property type="match status" value="1"/>
</dbReference>
<dbReference type="Pfam" id="PF09816">
    <property type="entry name" value="EAF"/>
    <property type="match status" value="1"/>
</dbReference>
<proteinExistence type="inferred from homology"/>
<keyword id="KW-0010">Activator</keyword>
<keyword id="KW-0217">Developmental protein</keyword>
<keyword id="KW-0539">Nucleus</keyword>
<keyword id="KW-0597">Phosphoprotein</keyword>
<keyword id="KW-1185">Reference proteome</keyword>
<keyword id="KW-0804">Transcription</keyword>
<keyword id="KW-0805">Transcription regulation</keyword>
<organism>
    <name type="scientific">Drosophila persimilis</name>
    <name type="common">Fruit fly</name>
    <dbReference type="NCBI Taxonomy" id="7234"/>
    <lineage>
        <taxon>Eukaryota</taxon>
        <taxon>Metazoa</taxon>
        <taxon>Ecdysozoa</taxon>
        <taxon>Arthropoda</taxon>
        <taxon>Hexapoda</taxon>
        <taxon>Insecta</taxon>
        <taxon>Pterygota</taxon>
        <taxon>Neoptera</taxon>
        <taxon>Endopterygota</taxon>
        <taxon>Diptera</taxon>
        <taxon>Brachycera</taxon>
        <taxon>Muscomorpha</taxon>
        <taxon>Ephydroidea</taxon>
        <taxon>Drosophilidae</taxon>
        <taxon>Drosophila</taxon>
        <taxon>Sophophora</taxon>
    </lineage>
</organism>
<reference evidence="5" key="1">
    <citation type="journal article" date="2007" name="Nature">
        <title>Evolution of genes and genomes on the Drosophila phylogeny.</title>
        <authorList>
            <consortium name="Drosophila 12 genomes consortium"/>
        </authorList>
    </citation>
    <scope>NUCLEOTIDE SEQUENCE [LARGE SCALE GENOMIC DNA]</scope>
    <source>
        <strain>MSH-3 / Tucson 14011-0111.49</strain>
    </source>
</reference>
<name>EAF_DROPE</name>
<evidence type="ECO:0000250" key="1">
    <source>
        <dbReference type="UniProtKB" id="Q7JRJ1"/>
    </source>
</evidence>
<evidence type="ECO:0000250" key="2">
    <source>
        <dbReference type="UniProtKB" id="Q96JC9"/>
    </source>
</evidence>
<evidence type="ECO:0000255" key="3"/>
<evidence type="ECO:0000256" key="4">
    <source>
        <dbReference type="SAM" id="MobiDB-lite"/>
    </source>
</evidence>
<evidence type="ECO:0000312" key="5">
    <source>
        <dbReference type="EMBL" id="EDW31490.1"/>
    </source>
</evidence>
<protein>
    <recommendedName>
        <fullName evidence="1">Ell-associated factor Eaf</fullName>
    </recommendedName>
</protein>
<sequence length="544" mass="60037">MMMTKQKNTLAERLNIGDEVRELKLGSTFNPKNTSTAFHTIKYDFKPASVDTSRMATVDVGSNNQVTVIVPNSELALNVRLLIFGLTESSGVPHTVYKGNQREYAKECLMIYDKETGAITIEKLNHNIQVKKTRTEVTNKPVQLPAQSVPMNMGHQGQVLGTNGSVPPPMAQLAQGPLSGPGGKLENSTMRVSSKDKVDFKPRNSPMQQSSPSRPVVTHRSPQSAPAWDANNAQQTLPSIPMITDDDDFGLRAAFHNGGQANISGSSTGSSSGQPDLYGSSSSSHMGKQRQAHGKRQQIHQRSSPPVQQQPHYQQQQQPNYGRAYNGASNYAQPHPQQQRHSPHQQPHQQQHQRHSPQQQQQRHSPQQLQQQRPTSYGHSNNMPMDLDSSREHDLASQSVAQAAAVLEQQIGGALSASSSSSESDSSDSDSGSDSDDSTEDDRSMKEQQEQQQQQQLQHQQIQQPAPHHQRHQQQQSQQHMNQLPNLGLGSISPSYNNHHNHQQPQPQPQQQQMSGVYASNGGFPNDLLQNDLQLSSNSSDDDD</sequence>